<evidence type="ECO:0000255" key="1">
    <source>
        <dbReference type="HAMAP-Rule" id="MF_00040"/>
    </source>
</evidence>
<gene>
    <name evidence="1" type="primary">frr</name>
    <name type="ordered locus">SSU98_1342</name>
</gene>
<keyword id="KW-0963">Cytoplasm</keyword>
<keyword id="KW-0648">Protein biosynthesis</keyword>
<comment type="function">
    <text evidence="1">Responsible for the release of ribosomes from messenger RNA at the termination of protein biosynthesis. May increase the efficiency of translation by recycling ribosomes from one round of translation to another.</text>
</comment>
<comment type="subcellular location">
    <subcellularLocation>
        <location evidence="1">Cytoplasm</location>
    </subcellularLocation>
</comment>
<comment type="similarity">
    <text evidence="1">Belongs to the RRF family.</text>
</comment>
<sequence length="185" mass="20664">MSKEIIAKAQERMNQSHQSLAREFSHIRAGRANASLLDRISVEYYGSPTPLNQLAGITVPEARVLLITPFDKSILKDIERALNASDLGLTPQSDGTVIRLVIPALTEETRKNLAKDVKKVGENSKVAIRNIRRDAMDEAKKAEKAKEITEDELKTLEKDIQKVTDDAIKTIDKMTADKEKELLEV</sequence>
<dbReference type="EMBL" id="CP000408">
    <property type="protein sequence ID" value="ABP92500.1"/>
    <property type="molecule type" value="Genomic_DNA"/>
</dbReference>
<dbReference type="SMR" id="A4W2B1"/>
<dbReference type="KEGG" id="ssv:SSU98_1342"/>
<dbReference type="HOGENOM" id="CLU_073981_2_0_9"/>
<dbReference type="GO" id="GO:0005737">
    <property type="term" value="C:cytoplasm"/>
    <property type="evidence" value="ECO:0007669"/>
    <property type="project" value="UniProtKB-SubCell"/>
</dbReference>
<dbReference type="GO" id="GO:0043023">
    <property type="term" value="F:ribosomal large subunit binding"/>
    <property type="evidence" value="ECO:0007669"/>
    <property type="project" value="TreeGrafter"/>
</dbReference>
<dbReference type="GO" id="GO:0006415">
    <property type="term" value="P:translational termination"/>
    <property type="evidence" value="ECO:0007669"/>
    <property type="project" value="UniProtKB-UniRule"/>
</dbReference>
<dbReference type="CDD" id="cd00520">
    <property type="entry name" value="RRF"/>
    <property type="match status" value="1"/>
</dbReference>
<dbReference type="FunFam" id="1.10.132.20:FF:000001">
    <property type="entry name" value="Ribosome-recycling factor"/>
    <property type="match status" value="1"/>
</dbReference>
<dbReference type="FunFam" id="3.30.1360.40:FF:000001">
    <property type="entry name" value="Ribosome-recycling factor"/>
    <property type="match status" value="1"/>
</dbReference>
<dbReference type="Gene3D" id="3.30.1360.40">
    <property type="match status" value="1"/>
</dbReference>
<dbReference type="Gene3D" id="1.10.132.20">
    <property type="entry name" value="Ribosome-recycling factor"/>
    <property type="match status" value="1"/>
</dbReference>
<dbReference type="HAMAP" id="MF_00040">
    <property type="entry name" value="RRF"/>
    <property type="match status" value="1"/>
</dbReference>
<dbReference type="InterPro" id="IPR002661">
    <property type="entry name" value="Ribosome_recyc_fac"/>
</dbReference>
<dbReference type="InterPro" id="IPR023584">
    <property type="entry name" value="Ribosome_recyc_fac_dom"/>
</dbReference>
<dbReference type="InterPro" id="IPR036191">
    <property type="entry name" value="RRF_sf"/>
</dbReference>
<dbReference type="NCBIfam" id="TIGR00496">
    <property type="entry name" value="frr"/>
    <property type="match status" value="1"/>
</dbReference>
<dbReference type="PANTHER" id="PTHR20982:SF3">
    <property type="entry name" value="MITOCHONDRIAL RIBOSOME RECYCLING FACTOR PSEUDO 1"/>
    <property type="match status" value="1"/>
</dbReference>
<dbReference type="PANTHER" id="PTHR20982">
    <property type="entry name" value="RIBOSOME RECYCLING FACTOR"/>
    <property type="match status" value="1"/>
</dbReference>
<dbReference type="Pfam" id="PF01765">
    <property type="entry name" value="RRF"/>
    <property type="match status" value="1"/>
</dbReference>
<dbReference type="SUPFAM" id="SSF55194">
    <property type="entry name" value="Ribosome recycling factor, RRF"/>
    <property type="match status" value="1"/>
</dbReference>
<name>RRF_STRS2</name>
<organism>
    <name type="scientific">Streptococcus suis (strain 98HAH33)</name>
    <dbReference type="NCBI Taxonomy" id="391296"/>
    <lineage>
        <taxon>Bacteria</taxon>
        <taxon>Bacillati</taxon>
        <taxon>Bacillota</taxon>
        <taxon>Bacilli</taxon>
        <taxon>Lactobacillales</taxon>
        <taxon>Streptococcaceae</taxon>
        <taxon>Streptococcus</taxon>
    </lineage>
</organism>
<reference key="1">
    <citation type="journal article" date="2007" name="PLoS ONE">
        <title>A glimpse of streptococcal toxic shock syndrome from comparative genomics of S. suis 2 Chinese isolates.</title>
        <authorList>
            <person name="Chen C."/>
            <person name="Tang J."/>
            <person name="Dong W."/>
            <person name="Wang C."/>
            <person name="Feng Y."/>
            <person name="Wang J."/>
            <person name="Zheng F."/>
            <person name="Pan X."/>
            <person name="Liu D."/>
            <person name="Li M."/>
            <person name="Song Y."/>
            <person name="Zhu X."/>
            <person name="Sun H."/>
            <person name="Feng T."/>
            <person name="Guo Z."/>
            <person name="Ju A."/>
            <person name="Ge J."/>
            <person name="Dong Y."/>
            <person name="Sun W."/>
            <person name="Jiang Y."/>
            <person name="Wang J."/>
            <person name="Yan J."/>
            <person name="Yang H."/>
            <person name="Wang X."/>
            <person name="Gao G.F."/>
            <person name="Yang R."/>
            <person name="Wang J."/>
            <person name="Yu J."/>
        </authorList>
    </citation>
    <scope>NUCLEOTIDE SEQUENCE [LARGE SCALE GENOMIC DNA]</scope>
    <source>
        <strain>98HAH33</strain>
    </source>
</reference>
<feature type="chain" id="PRO_1000003289" description="Ribosome-recycling factor">
    <location>
        <begin position="1"/>
        <end position="185"/>
    </location>
</feature>
<accession>A4W2B1</accession>
<proteinExistence type="inferred from homology"/>
<protein>
    <recommendedName>
        <fullName evidence="1">Ribosome-recycling factor</fullName>
        <shortName evidence="1">RRF</shortName>
    </recommendedName>
    <alternativeName>
        <fullName evidence="1">Ribosome-releasing factor</fullName>
    </alternativeName>
</protein>